<reference key="1">
    <citation type="journal article" date="2005" name="Nature">
        <title>The genome sequence of the rice blast fungus Magnaporthe grisea.</title>
        <authorList>
            <person name="Dean R.A."/>
            <person name="Talbot N.J."/>
            <person name="Ebbole D.J."/>
            <person name="Farman M.L."/>
            <person name="Mitchell T.K."/>
            <person name="Orbach M.J."/>
            <person name="Thon M.R."/>
            <person name="Kulkarni R."/>
            <person name="Xu J.-R."/>
            <person name="Pan H."/>
            <person name="Read N.D."/>
            <person name="Lee Y.-H."/>
            <person name="Carbone I."/>
            <person name="Brown D."/>
            <person name="Oh Y.Y."/>
            <person name="Donofrio N."/>
            <person name="Jeong J.S."/>
            <person name="Soanes D.M."/>
            <person name="Djonovic S."/>
            <person name="Kolomiets E."/>
            <person name="Rehmeyer C."/>
            <person name="Li W."/>
            <person name="Harding M."/>
            <person name="Kim S."/>
            <person name="Lebrun M.-H."/>
            <person name="Bohnert H."/>
            <person name="Coughlan S."/>
            <person name="Butler J."/>
            <person name="Calvo S.E."/>
            <person name="Ma L.-J."/>
            <person name="Nicol R."/>
            <person name="Purcell S."/>
            <person name="Nusbaum C."/>
            <person name="Galagan J.E."/>
            <person name="Birren B.W."/>
        </authorList>
    </citation>
    <scope>NUCLEOTIDE SEQUENCE [LARGE SCALE GENOMIC DNA]</scope>
    <source>
        <strain>70-15 / ATCC MYA-4617 / FGSC 8958</strain>
    </source>
</reference>
<gene>
    <name type="primary">ABD1</name>
    <name type="ORF">MGG_06505</name>
</gene>
<organism>
    <name type="scientific">Pyricularia oryzae (strain 70-15 / ATCC MYA-4617 / FGSC 8958)</name>
    <name type="common">Rice blast fungus</name>
    <name type="synonym">Magnaporthe oryzae</name>
    <dbReference type="NCBI Taxonomy" id="242507"/>
    <lineage>
        <taxon>Eukaryota</taxon>
        <taxon>Fungi</taxon>
        <taxon>Dikarya</taxon>
        <taxon>Ascomycota</taxon>
        <taxon>Pezizomycotina</taxon>
        <taxon>Sordariomycetes</taxon>
        <taxon>Sordariomycetidae</taxon>
        <taxon>Magnaporthales</taxon>
        <taxon>Pyriculariaceae</taxon>
        <taxon>Pyricularia</taxon>
    </lineage>
</organism>
<proteinExistence type="inferred from homology"/>
<protein>
    <recommendedName>
        <fullName>mRNA cap guanine-N(7) methyltransferase</fullName>
        <ecNumber evidence="2">2.1.1.56</ecNumber>
    </recommendedName>
    <alternativeName>
        <fullName>mRNA (guanine-N(7))-methyltransferase</fullName>
    </alternativeName>
    <alternativeName>
        <fullName>mRNA cap methyltransferase</fullName>
    </alternativeName>
</protein>
<comment type="function">
    <text evidence="1">Responsible for methylating the 5'-cap structure of mRNAs.</text>
</comment>
<comment type="catalytic activity">
    <reaction evidence="2 3">
        <text>a 5'-end (5'-triphosphoguanosine)-ribonucleoside in mRNA + S-adenosyl-L-methionine = a 5'-end (N(7)-methyl 5'-triphosphoguanosine)-ribonucleoside in mRNA + S-adenosyl-L-homocysteine</text>
        <dbReference type="Rhea" id="RHEA:67008"/>
        <dbReference type="Rhea" id="RHEA-COMP:17166"/>
        <dbReference type="Rhea" id="RHEA-COMP:17167"/>
        <dbReference type="ChEBI" id="CHEBI:57856"/>
        <dbReference type="ChEBI" id="CHEBI:59789"/>
        <dbReference type="ChEBI" id="CHEBI:156461"/>
        <dbReference type="ChEBI" id="CHEBI:167617"/>
        <dbReference type="EC" id="2.1.1.56"/>
    </reaction>
</comment>
<comment type="subcellular location">
    <subcellularLocation>
        <location evidence="1">Nucleus</location>
    </subcellularLocation>
</comment>
<comment type="similarity">
    <text evidence="3">Belongs to the class I-like SAM-binding methyltransferase superfamily. mRNA cap 0 methyltransferase family.</text>
</comment>
<sequence length="486" mass="54649">MAGGADLDEPPRQSDSTTDRKRPADSTHEIGSADVPRDRAGNKTYDISKLEPARKRQRSKSPSGEAAPRKLKRPGARATISEADRKAARERALERERLAREAATADEERQQINDVVKAHYNAVPERGRDWRKTDSRIKGLRSFNNWIKSCIIQKFSPDEDHQPGRGGGPSILVLDMGCGKGGDLGKWQQAPQHVELYVGMDPADVSIDQARDRYRSMSSRGGRGGRGGRGGGRGPARLFEARFHVKDCFGEPISDIDIIRQVGFESGPHGGGRGFDVVSMMFCMHYAFETEQKARQMLKNVAGALRKGGRLIGAIPNSDVISTKVREHNERMVEMKKKQAEAGDGSKKDDGGDAEEGELDEPEVEKSAEWGNDIYRVRFPGKTPEDGIFRPPFGWKYNFFLHEAVEEVPEYVVPWEAFRALAEDYNLELQWHRSFKEIWDQEKDDRTLGPLSERMHVRDRNTGELLVSPEELEAANFYVGFCFYKV</sequence>
<name>MCES_PYRO7</name>
<accession>A4R8D7</accession>
<accession>G4N6X1</accession>
<keyword id="KW-0489">Methyltransferase</keyword>
<keyword id="KW-0506">mRNA capping</keyword>
<keyword id="KW-0507">mRNA processing</keyword>
<keyword id="KW-0539">Nucleus</keyword>
<keyword id="KW-1185">Reference proteome</keyword>
<keyword id="KW-0694">RNA-binding</keyword>
<keyword id="KW-0949">S-adenosyl-L-methionine</keyword>
<keyword id="KW-0808">Transferase</keyword>
<dbReference type="EC" id="2.1.1.56" evidence="2"/>
<dbReference type="EMBL" id="CM001234">
    <property type="protein sequence ID" value="EHA50735.1"/>
    <property type="molecule type" value="Genomic_DNA"/>
</dbReference>
<dbReference type="RefSeq" id="XP_003717054.1">
    <property type="nucleotide sequence ID" value="XM_003717006.1"/>
</dbReference>
<dbReference type="SMR" id="A4R8D7"/>
<dbReference type="FunCoup" id="A4R8D7">
    <property type="interactions" value="1029"/>
</dbReference>
<dbReference type="STRING" id="242507.A4R8D7"/>
<dbReference type="EnsemblFungi" id="MGG_06505T0">
    <property type="protein sequence ID" value="MGG_06505T0"/>
    <property type="gene ID" value="MGG_06505"/>
</dbReference>
<dbReference type="GeneID" id="2684660"/>
<dbReference type="KEGG" id="mgr:MGG_06505"/>
<dbReference type="VEuPathDB" id="FungiDB:MGG_06505"/>
<dbReference type="eggNOG" id="KOG1975">
    <property type="taxonomic scope" value="Eukaryota"/>
</dbReference>
<dbReference type="HOGENOM" id="CLU_020346_3_1_1"/>
<dbReference type="InParanoid" id="A4R8D7"/>
<dbReference type="OMA" id="LITGDCF"/>
<dbReference type="OrthoDB" id="10248867at2759"/>
<dbReference type="Proteomes" id="UP000009058">
    <property type="component" value="Chromosome 4"/>
</dbReference>
<dbReference type="GO" id="GO:0005634">
    <property type="term" value="C:nucleus"/>
    <property type="evidence" value="ECO:0007669"/>
    <property type="project" value="UniProtKB-SubCell"/>
</dbReference>
<dbReference type="GO" id="GO:0004482">
    <property type="term" value="F:mRNA 5'-cap (guanine-N7-)-methyltransferase activity"/>
    <property type="evidence" value="ECO:0007669"/>
    <property type="project" value="UniProtKB-EC"/>
</dbReference>
<dbReference type="GO" id="GO:0003723">
    <property type="term" value="F:RNA binding"/>
    <property type="evidence" value="ECO:0007669"/>
    <property type="project" value="UniProtKB-KW"/>
</dbReference>
<dbReference type="Gene3D" id="3.40.50.150">
    <property type="entry name" value="Vaccinia Virus protein VP39"/>
    <property type="match status" value="1"/>
</dbReference>
<dbReference type="InterPro" id="IPR004971">
    <property type="entry name" value="mRNA_G-N7_MeTrfase_dom"/>
</dbReference>
<dbReference type="InterPro" id="IPR016899">
    <property type="entry name" value="mRNA_G-N7_MeTrfase_euk"/>
</dbReference>
<dbReference type="InterPro" id="IPR039753">
    <property type="entry name" value="RG7MT1"/>
</dbReference>
<dbReference type="InterPro" id="IPR029063">
    <property type="entry name" value="SAM-dependent_MTases_sf"/>
</dbReference>
<dbReference type="PANTHER" id="PTHR12189:SF2">
    <property type="entry name" value="MRNA CAP GUANINE-N7 METHYLTRANSFERASE"/>
    <property type="match status" value="1"/>
</dbReference>
<dbReference type="PANTHER" id="PTHR12189">
    <property type="entry name" value="MRNA GUANINE-7- METHYLTRANSFERASE"/>
    <property type="match status" value="1"/>
</dbReference>
<dbReference type="Pfam" id="PF03291">
    <property type="entry name" value="mRNA_G-N7_MeTrfase"/>
    <property type="match status" value="2"/>
</dbReference>
<dbReference type="PIRSF" id="PIRSF028762">
    <property type="entry name" value="ABD1"/>
    <property type="match status" value="1"/>
</dbReference>
<dbReference type="SUPFAM" id="SSF53335">
    <property type="entry name" value="S-adenosyl-L-methionine-dependent methyltransferases"/>
    <property type="match status" value="1"/>
</dbReference>
<dbReference type="PROSITE" id="PS51562">
    <property type="entry name" value="RNA_CAP0_MT"/>
    <property type="match status" value="1"/>
</dbReference>
<feature type="chain" id="PRO_0000303911" description="mRNA cap guanine-N(7) methyltransferase">
    <location>
        <begin position="1"/>
        <end position="486"/>
    </location>
</feature>
<feature type="domain" description="mRNA cap 0 methyltransferase" evidence="3">
    <location>
        <begin position="135"/>
        <end position="486"/>
    </location>
</feature>
<feature type="region of interest" description="Disordered" evidence="4">
    <location>
        <begin position="1"/>
        <end position="92"/>
    </location>
</feature>
<feature type="region of interest" description="Disordered" evidence="4">
    <location>
        <begin position="333"/>
        <end position="365"/>
    </location>
</feature>
<feature type="compositionally biased region" description="Basic and acidic residues" evidence="4">
    <location>
        <begin position="9"/>
        <end position="28"/>
    </location>
</feature>
<feature type="compositionally biased region" description="Basic and acidic residues" evidence="4">
    <location>
        <begin position="35"/>
        <end position="54"/>
    </location>
</feature>
<feature type="compositionally biased region" description="Basic and acidic residues" evidence="4">
    <location>
        <begin position="82"/>
        <end position="92"/>
    </location>
</feature>
<feature type="compositionally biased region" description="Basic and acidic residues" evidence="4">
    <location>
        <begin position="333"/>
        <end position="351"/>
    </location>
</feature>
<feature type="compositionally biased region" description="Acidic residues" evidence="4">
    <location>
        <begin position="352"/>
        <end position="363"/>
    </location>
</feature>
<feature type="binding site" evidence="3">
    <location>
        <begin position="144"/>
        <end position="145"/>
    </location>
    <ligand>
        <name>mRNA</name>
        <dbReference type="ChEBI" id="CHEBI:33699"/>
    </ligand>
    <ligandPart>
        <name>mRNA cap</name>
    </ligandPart>
</feature>
<feature type="binding site" evidence="3">
    <location>
        <position position="148"/>
    </location>
    <ligand>
        <name>S-adenosyl-L-methionine</name>
        <dbReference type="ChEBI" id="CHEBI:59789"/>
    </ligand>
</feature>
<feature type="binding site" evidence="3">
    <location>
        <position position="177"/>
    </location>
    <ligand>
        <name>S-adenosyl-L-methionine</name>
        <dbReference type="ChEBI" id="CHEBI:59789"/>
    </ligand>
</feature>
<feature type="binding site" evidence="3">
    <location>
        <position position="201"/>
    </location>
    <ligand>
        <name>S-adenosyl-L-methionine</name>
        <dbReference type="ChEBI" id="CHEBI:59789"/>
    </ligand>
</feature>
<feature type="binding site" evidence="2">
    <location>
        <position position="247"/>
    </location>
    <ligand>
        <name>S-adenosyl-L-methionine</name>
        <dbReference type="ChEBI" id="CHEBI:59789"/>
    </ligand>
</feature>
<feature type="binding site" evidence="3">
    <location>
        <begin position="281"/>
        <end position="283"/>
    </location>
    <ligand>
        <name>S-adenosyl-L-methionine</name>
        <dbReference type="ChEBI" id="CHEBI:59789"/>
    </ligand>
</feature>
<feature type="binding site" evidence="2">
    <location>
        <position position="286"/>
    </location>
    <ligand>
        <name>S-adenosyl-L-methionine</name>
        <dbReference type="ChEBI" id="CHEBI:59789"/>
    </ligand>
</feature>
<feature type="site" description="mRNA cap binding" evidence="3">
    <location>
        <position position="180"/>
    </location>
</feature>
<feature type="site" description="mRNA cap binding" evidence="3">
    <location>
        <position position="186"/>
    </location>
</feature>
<feature type="site" description="mRNA cap binding" evidence="3">
    <location>
        <position position="213"/>
    </location>
</feature>
<feature type="site" description="mRNA cap binding" evidence="3">
    <location>
        <position position="285"/>
    </location>
</feature>
<feature type="site" description="mRNA cap binding" evidence="3">
    <location>
        <position position="410"/>
    </location>
</feature>
<feature type="site" description="mRNA cap binding" evidence="3">
    <location>
        <position position="478"/>
    </location>
</feature>
<evidence type="ECO:0000250" key="1"/>
<evidence type="ECO:0000250" key="2">
    <source>
        <dbReference type="UniProtKB" id="O43148"/>
    </source>
</evidence>
<evidence type="ECO:0000255" key="3">
    <source>
        <dbReference type="PROSITE-ProRule" id="PRU00895"/>
    </source>
</evidence>
<evidence type="ECO:0000256" key="4">
    <source>
        <dbReference type="SAM" id="MobiDB-lite"/>
    </source>
</evidence>